<organism>
    <name type="scientific">Burkholderia orbicola (strain AU 1054)</name>
    <dbReference type="NCBI Taxonomy" id="331271"/>
    <lineage>
        <taxon>Bacteria</taxon>
        <taxon>Pseudomonadati</taxon>
        <taxon>Pseudomonadota</taxon>
        <taxon>Betaproteobacteria</taxon>
        <taxon>Burkholderiales</taxon>
        <taxon>Burkholderiaceae</taxon>
        <taxon>Burkholderia</taxon>
        <taxon>Burkholderia cepacia complex</taxon>
        <taxon>Burkholderia orbicola</taxon>
    </lineage>
</organism>
<feature type="chain" id="PRO_0000270261" description="Methionine import ATP-binding protein MetN 1">
    <location>
        <begin position="1"/>
        <end position="344"/>
    </location>
</feature>
<feature type="domain" description="ABC transporter" evidence="1">
    <location>
        <begin position="2"/>
        <end position="241"/>
    </location>
</feature>
<feature type="binding site" evidence="1">
    <location>
        <begin position="38"/>
        <end position="45"/>
    </location>
    <ligand>
        <name>ATP</name>
        <dbReference type="ChEBI" id="CHEBI:30616"/>
    </ligand>
</feature>
<reference key="1">
    <citation type="submission" date="2006-05" db="EMBL/GenBank/DDBJ databases">
        <title>Complete sequence of chromosome 1 of Burkholderia cenocepacia AU 1054.</title>
        <authorList>
            <consortium name="US DOE Joint Genome Institute"/>
            <person name="Copeland A."/>
            <person name="Lucas S."/>
            <person name="Lapidus A."/>
            <person name="Barry K."/>
            <person name="Detter J.C."/>
            <person name="Glavina del Rio T."/>
            <person name="Hammon N."/>
            <person name="Israni S."/>
            <person name="Dalin E."/>
            <person name="Tice H."/>
            <person name="Pitluck S."/>
            <person name="Chain P."/>
            <person name="Malfatti S."/>
            <person name="Shin M."/>
            <person name="Vergez L."/>
            <person name="Schmutz J."/>
            <person name="Larimer F."/>
            <person name="Land M."/>
            <person name="Hauser L."/>
            <person name="Kyrpides N."/>
            <person name="Lykidis A."/>
            <person name="LiPuma J.J."/>
            <person name="Konstantinidis K."/>
            <person name="Tiedje J.M."/>
            <person name="Richardson P."/>
        </authorList>
    </citation>
    <scope>NUCLEOTIDE SEQUENCE [LARGE SCALE GENOMIC DNA]</scope>
    <source>
        <strain>AU 1054</strain>
    </source>
</reference>
<dbReference type="EC" id="7.4.2.11" evidence="1"/>
<dbReference type="EMBL" id="CP000378">
    <property type="protein sequence ID" value="ABF75491.1"/>
    <property type="status" value="ALT_INIT"/>
    <property type="molecule type" value="Genomic_DNA"/>
</dbReference>
<dbReference type="SMR" id="Q1BY14"/>
<dbReference type="HOGENOM" id="CLU_000604_1_3_4"/>
<dbReference type="GO" id="GO:0005886">
    <property type="term" value="C:plasma membrane"/>
    <property type="evidence" value="ECO:0007669"/>
    <property type="project" value="UniProtKB-SubCell"/>
</dbReference>
<dbReference type="GO" id="GO:0033232">
    <property type="term" value="F:ABC-type D-methionine transporter activity"/>
    <property type="evidence" value="ECO:0007669"/>
    <property type="project" value="UniProtKB-EC"/>
</dbReference>
<dbReference type="GO" id="GO:0005524">
    <property type="term" value="F:ATP binding"/>
    <property type="evidence" value="ECO:0007669"/>
    <property type="project" value="UniProtKB-KW"/>
</dbReference>
<dbReference type="GO" id="GO:0016887">
    <property type="term" value="F:ATP hydrolysis activity"/>
    <property type="evidence" value="ECO:0007669"/>
    <property type="project" value="InterPro"/>
</dbReference>
<dbReference type="CDD" id="cd03258">
    <property type="entry name" value="ABC_MetN_methionine_transporter"/>
    <property type="match status" value="1"/>
</dbReference>
<dbReference type="FunFam" id="3.40.50.300:FF:000056">
    <property type="entry name" value="Cell division ATP-binding protein FtsE"/>
    <property type="match status" value="1"/>
</dbReference>
<dbReference type="Gene3D" id="3.30.70.260">
    <property type="match status" value="1"/>
</dbReference>
<dbReference type="Gene3D" id="3.40.50.300">
    <property type="entry name" value="P-loop containing nucleotide triphosphate hydrolases"/>
    <property type="match status" value="1"/>
</dbReference>
<dbReference type="InterPro" id="IPR003593">
    <property type="entry name" value="AAA+_ATPase"/>
</dbReference>
<dbReference type="InterPro" id="IPR003439">
    <property type="entry name" value="ABC_transporter-like_ATP-bd"/>
</dbReference>
<dbReference type="InterPro" id="IPR017871">
    <property type="entry name" value="ABC_transporter-like_CS"/>
</dbReference>
<dbReference type="InterPro" id="IPR045865">
    <property type="entry name" value="ACT-like_dom_sf"/>
</dbReference>
<dbReference type="InterPro" id="IPR041701">
    <property type="entry name" value="MetN_ABC"/>
</dbReference>
<dbReference type="InterPro" id="IPR050086">
    <property type="entry name" value="MetN_ABC_transporter-like"/>
</dbReference>
<dbReference type="InterPro" id="IPR018449">
    <property type="entry name" value="NIL_domain"/>
</dbReference>
<dbReference type="InterPro" id="IPR027417">
    <property type="entry name" value="P-loop_NTPase"/>
</dbReference>
<dbReference type="PANTHER" id="PTHR43166">
    <property type="entry name" value="AMINO ACID IMPORT ATP-BINDING PROTEIN"/>
    <property type="match status" value="1"/>
</dbReference>
<dbReference type="PANTHER" id="PTHR43166:SF30">
    <property type="entry name" value="METHIONINE IMPORT ATP-BINDING PROTEIN METN"/>
    <property type="match status" value="1"/>
</dbReference>
<dbReference type="Pfam" id="PF00005">
    <property type="entry name" value="ABC_tran"/>
    <property type="match status" value="1"/>
</dbReference>
<dbReference type="Pfam" id="PF09383">
    <property type="entry name" value="NIL"/>
    <property type="match status" value="1"/>
</dbReference>
<dbReference type="SMART" id="SM00382">
    <property type="entry name" value="AAA"/>
    <property type="match status" value="1"/>
</dbReference>
<dbReference type="SMART" id="SM00930">
    <property type="entry name" value="NIL"/>
    <property type="match status" value="1"/>
</dbReference>
<dbReference type="SUPFAM" id="SSF55021">
    <property type="entry name" value="ACT-like"/>
    <property type="match status" value="1"/>
</dbReference>
<dbReference type="SUPFAM" id="SSF52540">
    <property type="entry name" value="P-loop containing nucleoside triphosphate hydrolases"/>
    <property type="match status" value="1"/>
</dbReference>
<dbReference type="PROSITE" id="PS00211">
    <property type="entry name" value="ABC_TRANSPORTER_1"/>
    <property type="match status" value="1"/>
</dbReference>
<dbReference type="PROSITE" id="PS50893">
    <property type="entry name" value="ABC_TRANSPORTER_2"/>
    <property type="match status" value="1"/>
</dbReference>
<dbReference type="PROSITE" id="PS51264">
    <property type="entry name" value="METN"/>
    <property type="match status" value="1"/>
</dbReference>
<evidence type="ECO:0000255" key="1">
    <source>
        <dbReference type="HAMAP-Rule" id="MF_01719"/>
    </source>
</evidence>
<evidence type="ECO:0000305" key="2"/>
<comment type="function">
    <text evidence="1">Part of the ABC transporter complex MetNIQ involved in methionine import. Responsible for energy coupling to the transport system.</text>
</comment>
<comment type="catalytic activity">
    <reaction evidence="1">
        <text>L-methionine(out) + ATP + H2O = L-methionine(in) + ADP + phosphate + H(+)</text>
        <dbReference type="Rhea" id="RHEA:29779"/>
        <dbReference type="ChEBI" id="CHEBI:15377"/>
        <dbReference type="ChEBI" id="CHEBI:15378"/>
        <dbReference type="ChEBI" id="CHEBI:30616"/>
        <dbReference type="ChEBI" id="CHEBI:43474"/>
        <dbReference type="ChEBI" id="CHEBI:57844"/>
        <dbReference type="ChEBI" id="CHEBI:456216"/>
        <dbReference type="EC" id="7.4.2.11"/>
    </reaction>
</comment>
<comment type="catalytic activity">
    <reaction evidence="1">
        <text>D-methionine(out) + ATP + H2O = D-methionine(in) + ADP + phosphate + H(+)</text>
        <dbReference type="Rhea" id="RHEA:29767"/>
        <dbReference type="ChEBI" id="CHEBI:15377"/>
        <dbReference type="ChEBI" id="CHEBI:15378"/>
        <dbReference type="ChEBI" id="CHEBI:30616"/>
        <dbReference type="ChEBI" id="CHEBI:43474"/>
        <dbReference type="ChEBI" id="CHEBI:57932"/>
        <dbReference type="ChEBI" id="CHEBI:456216"/>
        <dbReference type="EC" id="7.4.2.11"/>
    </reaction>
</comment>
<comment type="subunit">
    <text evidence="1">The complex is composed of two ATP-binding proteins (MetN), two transmembrane proteins (MetI) and a solute-binding protein (MetQ).</text>
</comment>
<comment type="subcellular location">
    <subcellularLocation>
        <location evidence="1">Cell inner membrane</location>
        <topology evidence="1">Peripheral membrane protein</topology>
    </subcellularLocation>
</comment>
<comment type="similarity">
    <text evidence="1">Belongs to the ABC transporter superfamily. Methionine importer (TC 3.A.1.24) family.</text>
</comment>
<comment type="sequence caution" evidence="2">
    <conflict type="erroneous initiation">
        <sequence resource="EMBL-CDS" id="ABF75491"/>
    </conflict>
</comment>
<proteinExistence type="inferred from homology"/>
<sequence>MIELRNLSQRFPGPGGWVEALHNVNLTIPQGEVFGIIGRSGAGKSTLVRTINLLTRPTEGNVVVGGRDLTLLSAGALREARREIGMIFQHFNLLSSRTVFDNVALPLELAGASRADIEAAVLPLLDLVGLSAQKDRYPSQISGGQKQRVGIARALASQPKVLLSDEATSALDPETTRSILDLLKRINRELGLTIVLITHQMEVIKQVCDRVAVLDAGRVVEEGRVIDVFLQPHHEVTRALIGDVIAQELPPALKARVAERLKTGRGHLLRLAFTGSGVDQPILSETIRRYELDFNILHGQIDEIQGQAFGSLAVLAGGEPGKVGQALAFLREQGVVVEELSYVE</sequence>
<protein>
    <recommendedName>
        <fullName evidence="1">Methionine import ATP-binding protein MetN 1</fullName>
        <ecNumber evidence="1">7.4.2.11</ecNumber>
    </recommendedName>
</protein>
<accession>Q1BY14</accession>
<keyword id="KW-0029">Amino-acid transport</keyword>
<keyword id="KW-0067">ATP-binding</keyword>
<keyword id="KW-0997">Cell inner membrane</keyword>
<keyword id="KW-1003">Cell membrane</keyword>
<keyword id="KW-0472">Membrane</keyword>
<keyword id="KW-0547">Nucleotide-binding</keyword>
<keyword id="KW-1278">Translocase</keyword>
<keyword id="KW-0813">Transport</keyword>
<gene>
    <name evidence="1" type="primary">metN1</name>
    <name type="ordered locus">Bcen_0580</name>
</gene>
<name>METN1_BURO1</name>